<proteinExistence type="inferred from homology"/>
<feature type="chain" id="PRO_1000054803" description="Small ribosomal subunit protein uS15">
    <location>
        <begin position="1"/>
        <end position="88"/>
    </location>
</feature>
<sequence length="88" mass="10221">MIAAEQKKQIISNFARKAGDTGSTEVQIALIDARIKELNEHFKSHKKDFHSKTGLLRLVGKRKKLLDYLKRTELDRYKKLIETLGLRK</sequence>
<name>RS15_LEPBJ</name>
<gene>
    <name evidence="1" type="primary">rpsO</name>
    <name type="ordered locus">LBJ_0949</name>
</gene>
<comment type="function">
    <text evidence="1">One of the primary rRNA binding proteins, it binds directly to 16S rRNA where it helps nucleate assembly of the platform of the 30S subunit by binding and bridging several RNA helices of the 16S rRNA.</text>
</comment>
<comment type="function">
    <text evidence="1">Forms an intersubunit bridge (bridge B4) with the 23S rRNA of the 50S subunit in the ribosome.</text>
</comment>
<comment type="subunit">
    <text evidence="1">Part of the 30S ribosomal subunit. Forms a bridge to the 50S subunit in the 70S ribosome, contacting the 23S rRNA.</text>
</comment>
<comment type="similarity">
    <text evidence="1">Belongs to the universal ribosomal protein uS15 family.</text>
</comment>
<organism>
    <name type="scientific">Leptospira borgpetersenii serovar Hardjo-bovis (strain JB197)</name>
    <dbReference type="NCBI Taxonomy" id="355277"/>
    <lineage>
        <taxon>Bacteria</taxon>
        <taxon>Pseudomonadati</taxon>
        <taxon>Spirochaetota</taxon>
        <taxon>Spirochaetia</taxon>
        <taxon>Leptospirales</taxon>
        <taxon>Leptospiraceae</taxon>
        <taxon>Leptospira</taxon>
    </lineage>
</organism>
<dbReference type="EMBL" id="CP000350">
    <property type="protein sequence ID" value="ABJ75592.1"/>
    <property type="molecule type" value="Genomic_DNA"/>
</dbReference>
<dbReference type="RefSeq" id="WP_002632045.1">
    <property type="nucleotide sequence ID" value="NC_008510.1"/>
</dbReference>
<dbReference type="SMR" id="Q04U28"/>
<dbReference type="GeneID" id="61174752"/>
<dbReference type="KEGG" id="lbj:LBJ_0949"/>
<dbReference type="HOGENOM" id="CLU_148518_0_0_12"/>
<dbReference type="Proteomes" id="UP000000656">
    <property type="component" value="Chromosome 1"/>
</dbReference>
<dbReference type="GO" id="GO:0022627">
    <property type="term" value="C:cytosolic small ribosomal subunit"/>
    <property type="evidence" value="ECO:0007669"/>
    <property type="project" value="TreeGrafter"/>
</dbReference>
<dbReference type="GO" id="GO:0019843">
    <property type="term" value="F:rRNA binding"/>
    <property type="evidence" value="ECO:0007669"/>
    <property type="project" value="UniProtKB-UniRule"/>
</dbReference>
<dbReference type="GO" id="GO:0003735">
    <property type="term" value="F:structural constituent of ribosome"/>
    <property type="evidence" value="ECO:0007669"/>
    <property type="project" value="InterPro"/>
</dbReference>
<dbReference type="GO" id="GO:0006412">
    <property type="term" value="P:translation"/>
    <property type="evidence" value="ECO:0007669"/>
    <property type="project" value="UniProtKB-UniRule"/>
</dbReference>
<dbReference type="CDD" id="cd00353">
    <property type="entry name" value="Ribosomal_S15p_S13e"/>
    <property type="match status" value="1"/>
</dbReference>
<dbReference type="FunFam" id="1.10.287.10:FF:000002">
    <property type="entry name" value="30S ribosomal protein S15"/>
    <property type="match status" value="1"/>
</dbReference>
<dbReference type="Gene3D" id="6.10.250.3130">
    <property type="match status" value="1"/>
</dbReference>
<dbReference type="Gene3D" id="1.10.287.10">
    <property type="entry name" value="S15/NS1, RNA-binding"/>
    <property type="match status" value="1"/>
</dbReference>
<dbReference type="HAMAP" id="MF_01343_B">
    <property type="entry name" value="Ribosomal_uS15_B"/>
    <property type="match status" value="1"/>
</dbReference>
<dbReference type="InterPro" id="IPR000589">
    <property type="entry name" value="Ribosomal_uS15"/>
</dbReference>
<dbReference type="InterPro" id="IPR005290">
    <property type="entry name" value="Ribosomal_uS15_bac-type"/>
</dbReference>
<dbReference type="InterPro" id="IPR009068">
    <property type="entry name" value="uS15_NS1_RNA-bd_sf"/>
</dbReference>
<dbReference type="NCBIfam" id="TIGR00952">
    <property type="entry name" value="S15_bact"/>
    <property type="match status" value="1"/>
</dbReference>
<dbReference type="PANTHER" id="PTHR23321">
    <property type="entry name" value="RIBOSOMAL PROTEIN S15, BACTERIAL AND ORGANELLAR"/>
    <property type="match status" value="1"/>
</dbReference>
<dbReference type="PANTHER" id="PTHR23321:SF26">
    <property type="entry name" value="SMALL RIBOSOMAL SUBUNIT PROTEIN US15M"/>
    <property type="match status" value="1"/>
</dbReference>
<dbReference type="Pfam" id="PF00312">
    <property type="entry name" value="Ribosomal_S15"/>
    <property type="match status" value="1"/>
</dbReference>
<dbReference type="SMART" id="SM01387">
    <property type="entry name" value="Ribosomal_S15"/>
    <property type="match status" value="1"/>
</dbReference>
<dbReference type="SUPFAM" id="SSF47060">
    <property type="entry name" value="S15/NS1 RNA-binding domain"/>
    <property type="match status" value="1"/>
</dbReference>
<dbReference type="PROSITE" id="PS00362">
    <property type="entry name" value="RIBOSOMAL_S15"/>
    <property type="match status" value="1"/>
</dbReference>
<evidence type="ECO:0000255" key="1">
    <source>
        <dbReference type="HAMAP-Rule" id="MF_01343"/>
    </source>
</evidence>
<evidence type="ECO:0000305" key="2"/>
<protein>
    <recommendedName>
        <fullName evidence="1">Small ribosomal subunit protein uS15</fullName>
    </recommendedName>
    <alternativeName>
        <fullName evidence="2">30S ribosomal protein S15</fullName>
    </alternativeName>
</protein>
<accession>Q04U28</accession>
<keyword id="KW-0687">Ribonucleoprotein</keyword>
<keyword id="KW-0689">Ribosomal protein</keyword>
<keyword id="KW-0694">RNA-binding</keyword>
<keyword id="KW-0699">rRNA-binding</keyword>
<reference key="1">
    <citation type="journal article" date="2006" name="Proc. Natl. Acad. Sci. U.S.A.">
        <title>Genome reduction in Leptospira borgpetersenii reflects limited transmission potential.</title>
        <authorList>
            <person name="Bulach D.M."/>
            <person name="Zuerner R.L."/>
            <person name="Wilson P."/>
            <person name="Seemann T."/>
            <person name="McGrath A."/>
            <person name="Cullen P.A."/>
            <person name="Davis J."/>
            <person name="Johnson M."/>
            <person name="Kuczek E."/>
            <person name="Alt D.P."/>
            <person name="Peterson-Burch B."/>
            <person name="Coppel R.L."/>
            <person name="Rood J.I."/>
            <person name="Davies J.K."/>
            <person name="Adler B."/>
        </authorList>
    </citation>
    <scope>NUCLEOTIDE SEQUENCE [LARGE SCALE GENOMIC DNA]</scope>
    <source>
        <strain>JB197</strain>
    </source>
</reference>